<feature type="chain" id="PRO_0000347624" description="Alanine--tRNA ligase">
    <location>
        <begin position="1"/>
        <end position="880"/>
    </location>
</feature>
<feature type="binding site" evidence="1">
    <location>
        <position position="565"/>
    </location>
    <ligand>
        <name>Zn(2+)</name>
        <dbReference type="ChEBI" id="CHEBI:29105"/>
    </ligand>
</feature>
<feature type="binding site" evidence="1">
    <location>
        <position position="569"/>
    </location>
    <ligand>
        <name>Zn(2+)</name>
        <dbReference type="ChEBI" id="CHEBI:29105"/>
    </ligand>
</feature>
<feature type="binding site" evidence="1">
    <location>
        <position position="675"/>
    </location>
    <ligand>
        <name>Zn(2+)</name>
        <dbReference type="ChEBI" id="CHEBI:29105"/>
    </ligand>
</feature>
<feature type="binding site" evidence="1">
    <location>
        <position position="679"/>
    </location>
    <ligand>
        <name>Zn(2+)</name>
        <dbReference type="ChEBI" id="CHEBI:29105"/>
    </ligand>
</feature>
<dbReference type="EC" id="6.1.1.7" evidence="1"/>
<dbReference type="EMBL" id="CP000394">
    <property type="protein sequence ID" value="ABI62268.1"/>
    <property type="status" value="ALT_INIT"/>
    <property type="molecule type" value="Genomic_DNA"/>
</dbReference>
<dbReference type="RefSeq" id="WP_025318900.1">
    <property type="nucleotide sequence ID" value="NC_008343.2"/>
</dbReference>
<dbReference type="SMR" id="Q0BSD5"/>
<dbReference type="STRING" id="391165.GbCGDNIH1_1370"/>
<dbReference type="KEGG" id="gbe:GbCGDNIH1_1370"/>
<dbReference type="eggNOG" id="COG0013">
    <property type="taxonomic scope" value="Bacteria"/>
</dbReference>
<dbReference type="HOGENOM" id="CLU_004485_1_1_5"/>
<dbReference type="OrthoDB" id="9803884at2"/>
<dbReference type="Proteomes" id="UP000001963">
    <property type="component" value="Chromosome"/>
</dbReference>
<dbReference type="GO" id="GO:0005829">
    <property type="term" value="C:cytosol"/>
    <property type="evidence" value="ECO:0007669"/>
    <property type="project" value="TreeGrafter"/>
</dbReference>
<dbReference type="GO" id="GO:0004813">
    <property type="term" value="F:alanine-tRNA ligase activity"/>
    <property type="evidence" value="ECO:0007669"/>
    <property type="project" value="UniProtKB-UniRule"/>
</dbReference>
<dbReference type="GO" id="GO:0002161">
    <property type="term" value="F:aminoacyl-tRNA deacylase activity"/>
    <property type="evidence" value="ECO:0007669"/>
    <property type="project" value="TreeGrafter"/>
</dbReference>
<dbReference type="GO" id="GO:0005524">
    <property type="term" value="F:ATP binding"/>
    <property type="evidence" value="ECO:0007669"/>
    <property type="project" value="UniProtKB-UniRule"/>
</dbReference>
<dbReference type="GO" id="GO:0000049">
    <property type="term" value="F:tRNA binding"/>
    <property type="evidence" value="ECO:0007669"/>
    <property type="project" value="UniProtKB-KW"/>
</dbReference>
<dbReference type="GO" id="GO:0008270">
    <property type="term" value="F:zinc ion binding"/>
    <property type="evidence" value="ECO:0007669"/>
    <property type="project" value="UniProtKB-UniRule"/>
</dbReference>
<dbReference type="GO" id="GO:0006419">
    <property type="term" value="P:alanyl-tRNA aminoacylation"/>
    <property type="evidence" value="ECO:0007669"/>
    <property type="project" value="UniProtKB-UniRule"/>
</dbReference>
<dbReference type="GO" id="GO:0045892">
    <property type="term" value="P:negative regulation of DNA-templated transcription"/>
    <property type="evidence" value="ECO:0007669"/>
    <property type="project" value="TreeGrafter"/>
</dbReference>
<dbReference type="CDD" id="cd00673">
    <property type="entry name" value="AlaRS_core"/>
    <property type="match status" value="1"/>
</dbReference>
<dbReference type="FunFam" id="3.10.310.40:FF:000001">
    <property type="entry name" value="Alanine--tRNA ligase"/>
    <property type="match status" value="1"/>
</dbReference>
<dbReference type="FunFam" id="3.30.54.20:FF:000001">
    <property type="entry name" value="Alanine--tRNA ligase"/>
    <property type="match status" value="1"/>
</dbReference>
<dbReference type="FunFam" id="3.30.930.10:FF:000004">
    <property type="entry name" value="Alanine--tRNA ligase"/>
    <property type="match status" value="1"/>
</dbReference>
<dbReference type="FunFam" id="3.30.980.10:FF:000004">
    <property type="entry name" value="Alanine--tRNA ligase, cytoplasmic"/>
    <property type="match status" value="1"/>
</dbReference>
<dbReference type="Gene3D" id="2.40.30.130">
    <property type="match status" value="1"/>
</dbReference>
<dbReference type="Gene3D" id="3.10.310.40">
    <property type="match status" value="1"/>
</dbReference>
<dbReference type="Gene3D" id="3.30.54.20">
    <property type="match status" value="1"/>
</dbReference>
<dbReference type="Gene3D" id="6.10.250.550">
    <property type="match status" value="1"/>
</dbReference>
<dbReference type="Gene3D" id="3.30.930.10">
    <property type="entry name" value="Bira Bifunctional Protein, Domain 2"/>
    <property type="match status" value="1"/>
</dbReference>
<dbReference type="Gene3D" id="3.30.980.10">
    <property type="entry name" value="Threonyl-trna Synthetase, Chain A, domain 2"/>
    <property type="match status" value="1"/>
</dbReference>
<dbReference type="HAMAP" id="MF_00036_B">
    <property type="entry name" value="Ala_tRNA_synth_B"/>
    <property type="match status" value="1"/>
</dbReference>
<dbReference type="InterPro" id="IPR045864">
    <property type="entry name" value="aa-tRNA-synth_II/BPL/LPL"/>
</dbReference>
<dbReference type="InterPro" id="IPR002318">
    <property type="entry name" value="Ala-tRNA-lgiase_IIc"/>
</dbReference>
<dbReference type="InterPro" id="IPR018162">
    <property type="entry name" value="Ala-tRNA-ligase_IIc_anticod-bd"/>
</dbReference>
<dbReference type="InterPro" id="IPR018165">
    <property type="entry name" value="Ala-tRNA-synth_IIc_core"/>
</dbReference>
<dbReference type="InterPro" id="IPR018164">
    <property type="entry name" value="Ala-tRNA-synth_IIc_N"/>
</dbReference>
<dbReference type="InterPro" id="IPR050058">
    <property type="entry name" value="Ala-tRNA_ligase"/>
</dbReference>
<dbReference type="InterPro" id="IPR023033">
    <property type="entry name" value="Ala_tRNA_ligase_euk/bac"/>
</dbReference>
<dbReference type="InterPro" id="IPR003156">
    <property type="entry name" value="DHHA1_dom"/>
</dbReference>
<dbReference type="InterPro" id="IPR018163">
    <property type="entry name" value="Thr/Ala-tRNA-synth_IIc_edit"/>
</dbReference>
<dbReference type="InterPro" id="IPR009000">
    <property type="entry name" value="Transl_B-barrel_sf"/>
</dbReference>
<dbReference type="InterPro" id="IPR012947">
    <property type="entry name" value="tRNA_SAD"/>
</dbReference>
<dbReference type="NCBIfam" id="TIGR00344">
    <property type="entry name" value="alaS"/>
    <property type="match status" value="1"/>
</dbReference>
<dbReference type="PANTHER" id="PTHR11777:SF9">
    <property type="entry name" value="ALANINE--TRNA LIGASE, CYTOPLASMIC"/>
    <property type="match status" value="1"/>
</dbReference>
<dbReference type="PANTHER" id="PTHR11777">
    <property type="entry name" value="ALANYL-TRNA SYNTHETASE"/>
    <property type="match status" value="1"/>
</dbReference>
<dbReference type="Pfam" id="PF02272">
    <property type="entry name" value="DHHA1"/>
    <property type="match status" value="1"/>
</dbReference>
<dbReference type="Pfam" id="PF01411">
    <property type="entry name" value="tRNA-synt_2c"/>
    <property type="match status" value="1"/>
</dbReference>
<dbReference type="Pfam" id="PF07973">
    <property type="entry name" value="tRNA_SAD"/>
    <property type="match status" value="1"/>
</dbReference>
<dbReference type="PRINTS" id="PR00980">
    <property type="entry name" value="TRNASYNTHALA"/>
</dbReference>
<dbReference type="SMART" id="SM00863">
    <property type="entry name" value="tRNA_SAD"/>
    <property type="match status" value="1"/>
</dbReference>
<dbReference type="SUPFAM" id="SSF55681">
    <property type="entry name" value="Class II aaRS and biotin synthetases"/>
    <property type="match status" value="1"/>
</dbReference>
<dbReference type="SUPFAM" id="SSF101353">
    <property type="entry name" value="Putative anticodon-binding domain of alanyl-tRNA synthetase (AlaRS)"/>
    <property type="match status" value="1"/>
</dbReference>
<dbReference type="SUPFAM" id="SSF55186">
    <property type="entry name" value="ThrRS/AlaRS common domain"/>
    <property type="match status" value="1"/>
</dbReference>
<dbReference type="SUPFAM" id="SSF50447">
    <property type="entry name" value="Translation proteins"/>
    <property type="match status" value="1"/>
</dbReference>
<dbReference type="PROSITE" id="PS50860">
    <property type="entry name" value="AA_TRNA_LIGASE_II_ALA"/>
    <property type="match status" value="1"/>
</dbReference>
<organism>
    <name type="scientific">Granulibacter bethesdensis (strain ATCC BAA-1260 / CGDNIH1)</name>
    <dbReference type="NCBI Taxonomy" id="391165"/>
    <lineage>
        <taxon>Bacteria</taxon>
        <taxon>Pseudomonadati</taxon>
        <taxon>Pseudomonadota</taxon>
        <taxon>Alphaproteobacteria</taxon>
        <taxon>Acetobacterales</taxon>
        <taxon>Acetobacteraceae</taxon>
        <taxon>Granulibacter</taxon>
    </lineage>
</organism>
<gene>
    <name evidence="1" type="primary">alaS</name>
    <name type="ordered locus">GbCGDNIH1_1370</name>
</gene>
<accession>Q0BSD5</accession>
<evidence type="ECO:0000255" key="1">
    <source>
        <dbReference type="HAMAP-Rule" id="MF_00036"/>
    </source>
</evidence>
<evidence type="ECO:0000305" key="2"/>
<sequence length="880" mass="94553">MATSNDIRATFLNYFARNGHEVVDSSPLVPRNDPTLLFVNSGMVQFKNVFTGQERRPYSRATTSQKCVRAGGKHNDLDNVGYTARHHTFFEMLGNFSFGDYFKEQAITHAWNVVTREFGLPAEKLLVTVYQDDDDAARLWKSIAGLPEERIIRIASSDNFWRMGDTGPCGPCSEIFYDHGPSIPGGPPGSPDEDGDRFIEIWNLVFMQYEEGPPGTRVNLPRPSIDTGMGLERLAAVLQGKHDNYDTDTLRALIVASAEATGQDPDGPHKTSHRVVADHLRSTSFLMADGVLPSNEGRGYVLRRIMRRAMRHAHLMGMTEPLLYRLVPALVRQMGAAYGELVQAQSLITETLRLEETRFKAMLDRGLAMLSDEVGKLGEGQTLSGDVAFKLYDTYGFPLDLTQDALREQGRAVDVAGFDAAMTEQRRRARAAWSGSGDAAQEGVWFEIRDRVGGTEFLGYSTEKAEAEIIALVANGALTETAPAGTEVAVVLNQTPFYGESGGQVGDTGIITGPNGLRIIISDTQKKLGDVFVHLGRVESGLAQIGQPVEVVVDHQRRSAIRAHHSATHLLHEALRRRLGTHVAQKGSLNAPDRLRFDVSQPTPITRDDLAVVEAEVNALIRQNSPVNTRLMTPEQAVAEGAMALFGEKYGDEVRVVSMGAPVEEGKPAYSIELCGGTHVGRTGDIGLFRITGESAVSAGVRRIEAVTGEAALAQIAEAERRLQETASLLRVAPGDVTTRVASLLEERKKLEAQLADAQRKLATGGAADKVEEVGGVKLAARNLGDVAPKELKGLAEAIARQLESGVVALVSTAEGKASVVVGVTADLTSRFDAVTLVRAASAAVGGKGGGGRPDMAQAGGPDAAQADAALQAVRDAMAA</sequence>
<name>SYA_GRABC</name>
<proteinExistence type="inferred from homology"/>
<protein>
    <recommendedName>
        <fullName evidence="1">Alanine--tRNA ligase</fullName>
        <ecNumber evidence="1">6.1.1.7</ecNumber>
    </recommendedName>
    <alternativeName>
        <fullName evidence="1">Alanyl-tRNA synthetase</fullName>
        <shortName evidence="1">AlaRS</shortName>
    </alternativeName>
</protein>
<comment type="function">
    <text evidence="1">Catalyzes the attachment of alanine to tRNA(Ala) in a two-step reaction: alanine is first activated by ATP to form Ala-AMP and then transferred to the acceptor end of tRNA(Ala). Also edits incorrectly charged Ser-tRNA(Ala) and Gly-tRNA(Ala) via its editing domain.</text>
</comment>
<comment type="catalytic activity">
    <reaction evidence="1">
        <text>tRNA(Ala) + L-alanine + ATP = L-alanyl-tRNA(Ala) + AMP + diphosphate</text>
        <dbReference type="Rhea" id="RHEA:12540"/>
        <dbReference type="Rhea" id="RHEA-COMP:9657"/>
        <dbReference type="Rhea" id="RHEA-COMP:9923"/>
        <dbReference type="ChEBI" id="CHEBI:30616"/>
        <dbReference type="ChEBI" id="CHEBI:33019"/>
        <dbReference type="ChEBI" id="CHEBI:57972"/>
        <dbReference type="ChEBI" id="CHEBI:78442"/>
        <dbReference type="ChEBI" id="CHEBI:78497"/>
        <dbReference type="ChEBI" id="CHEBI:456215"/>
        <dbReference type="EC" id="6.1.1.7"/>
    </reaction>
</comment>
<comment type="cofactor">
    <cofactor evidence="1">
        <name>Zn(2+)</name>
        <dbReference type="ChEBI" id="CHEBI:29105"/>
    </cofactor>
    <text evidence="1">Binds 1 zinc ion per subunit.</text>
</comment>
<comment type="subcellular location">
    <subcellularLocation>
        <location evidence="1">Cytoplasm</location>
    </subcellularLocation>
</comment>
<comment type="domain">
    <text evidence="1">Consists of three domains; the N-terminal catalytic domain, the editing domain and the C-terminal C-Ala domain. The editing domain removes incorrectly charged amino acids, while the C-Ala domain, along with tRNA(Ala), serves as a bridge to cooperatively bring together the editing and aminoacylation centers thus stimulating deacylation of misacylated tRNAs.</text>
</comment>
<comment type="similarity">
    <text evidence="1">Belongs to the class-II aminoacyl-tRNA synthetase family.</text>
</comment>
<comment type="sequence caution" evidence="2">
    <conflict type="erroneous initiation">
        <sequence resource="EMBL-CDS" id="ABI62268"/>
    </conflict>
</comment>
<keyword id="KW-0030">Aminoacyl-tRNA synthetase</keyword>
<keyword id="KW-0067">ATP-binding</keyword>
<keyword id="KW-0963">Cytoplasm</keyword>
<keyword id="KW-0436">Ligase</keyword>
<keyword id="KW-0479">Metal-binding</keyword>
<keyword id="KW-0547">Nucleotide-binding</keyword>
<keyword id="KW-0648">Protein biosynthesis</keyword>
<keyword id="KW-1185">Reference proteome</keyword>
<keyword id="KW-0694">RNA-binding</keyword>
<keyword id="KW-0820">tRNA-binding</keyword>
<keyword id="KW-0862">Zinc</keyword>
<reference key="1">
    <citation type="journal article" date="2007" name="J. Bacteriol.">
        <title>Genome sequence analysis of the emerging human pathogenic acetic acid bacterium Granulibacter bethesdensis.</title>
        <authorList>
            <person name="Greenberg D.E."/>
            <person name="Porcella S.F."/>
            <person name="Zelazny A.M."/>
            <person name="Virtaneva K."/>
            <person name="Sturdevant D.E."/>
            <person name="Kupko J.J. III"/>
            <person name="Barbian K.D."/>
            <person name="Babar A."/>
            <person name="Dorward D.W."/>
            <person name="Holland S.M."/>
        </authorList>
    </citation>
    <scope>NUCLEOTIDE SEQUENCE [LARGE SCALE GENOMIC DNA]</scope>
    <source>
        <strain>ATCC BAA-1260 / CGDNIH1</strain>
    </source>
</reference>